<evidence type="ECO:0000255" key="1">
    <source>
        <dbReference type="HAMAP-Rule" id="MF_00272"/>
    </source>
</evidence>
<evidence type="ECO:0000255" key="2">
    <source>
        <dbReference type="PROSITE-ProRule" id="PRU01066"/>
    </source>
</evidence>
<proteinExistence type="inferred from homology"/>
<accession>Q189S4</accession>
<sequence>MKLLPELKYSKDHEWVKVIDGDVVYIGITDYAQDQLGEILFVETPEVEDTVTKGVDFGVVESSKVASDLISPVNGEVLEVNEKLEDEPECINEDPYENWILKVKLADVAELDTLLSDKEYEAGLE</sequence>
<protein>
    <recommendedName>
        <fullName evidence="1">Glycine cleavage system H protein</fullName>
    </recommendedName>
</protein>
<feature type="chain" id="PRO_0000302367" description="Glycine cleavage system H protein">
    <location>
        <begin position="1"/>
        <end position="125"/>
    </location>
</feature>
<feature type="domain" description="Lipoyl-binding" evidence="2">
    <location>
        <begin position="23"/>
        <end position="104"/>
    </location>
</feature>
<feature type="modified residue" description="N6-lipoyllysine" evidence="1">
    <location>
        <position position="64"/>
    </location>
</feature>
<name>GCSH_CLOD6</name>
<keyword id="KW-0450">Lipoyl</keyword>
<keyword id="KW-1185">Reference proteome</keyword>
<gene>
    <name evidence="1" type="primary">gcvH</name>
    <name type="ordered locus">CD630_07290</name>
</gene>
<dbReference type="EMBL" id="AM180355">
    <property type="protein sequence ID" value="CAJ67563.1"/>
    <property type="molecule type" value="Genomic_DNA"/>
</dbReference>
<dbReference type="RefSeq" id="WP_003418363.1">
    <property type="nucleotide sequence ID" value="NZ_JAUPES010000005.1"/>
</dbReference>
<dbReference type="RefSeq" id="YP_001087206.1">
    <property type="nucleotide sequence ID" value="NC_009089.1"/>
</dbReference>
<dbReference type="SMR" id="Q189S4"/>
<dbReference type="STRING" id="272563.CD630_07290"/>
<dbReference type="EnsemblBacteria" id="CAJ67563">
    <property type="protein sequence ID" value="CAJ67563"/>
    <property type="gene ID" value="CD630_07290"/>
</dbReference>
<dbReference type="GeneID" id="66353234"/>
<dbReference type="KEGG" id="cdf:CD630_07290"/>
<dbReference type="KEGG" id="pdc:CDIF630_00845"/>
<dbReference type="PATRIC" id="fig|272563.120.peg.750"/>
<dbReference type="eggNOG" id="COG0509">
    <property type="taxonomic scope" value="Bacteria"/>
</dbReference>
<dbReference type="OrthoDB" id="9796712at2"/>
<dbReference type="PhylomeDB" id="Q189S4"/>
<dbReference type="BioCyc" id="PDIF272563:G12WB-840-MONOMER"/>
<dbReference type="Proteomes" id="UP000001978">
    <property type="component" value="Chromosome"/>
</dbReference>
<dbReference type="GO" id="GO:0005737">
    <property type="term" value="C:cytoplasm"/>
    <property type="evidence" value="ECO:0007669"/>
    <property type="project" value="TreeGrafter"/>
</dbReference>
<dbReference type="GO" id="GO:0005960">
    <property type="term" value="C:glycine cleavage complex"/>
    <property type="evidence" value="ECO:0007669"/>
    <property type="project" value="InterPro"/>
</dbReference>
<dbReference type="GO" id="GO:0019464">
    <property type="term" value="P:glycine decarboxylation via glycine cleavage system"/>
    <property type="evidence" value="ECO:0007669"/>
    <property type="project" value="UniProtKB-UniRule"/>
</dbReference>
<dbReference type="CDD" id="cd06848">
    <property type="entry name" value="GCS_H"/>
    <property type="match status" value="1"/>
</dbReference>
<dbReference type="Gene3D" id="2.40.50.100">
    <property type="match status" value="1"/>
</dbReference>
<dbReference type="HAMAP" id="MF_00272">
    <property type="entry name" value="GcvH"/>
    <property type="match status" value="1"/>
</dbReference>
<dbReference type="InterPro" id="IPR000089">
    <property type="entry name" value="Biotin_lipoyl"/>
</dbReference>
<dbReference type="InterPro" id="IPR002930">
    <property type="entry name" value="GCV_H"/>
</dbReference>
<dbReference type="InterPro" id="IPR033753">
    <property type="entry name" value="GCV_H/Fam206"/>
</dbReference>
<dbReference type="InterPro" id="IPR017453">
    <property type="entry name" value="GCV_H_sub"/>
</dbReference>
<dbReference type="InterPro" id="IPR011053">
    <property type="entry name" value="Single_hybrid_motif"/>
</dbReference>
<dbReference type="NCBIfam" id="TIGR00527">
    <property type="entry name" value="gcvH"/>
    <property type="match status" value="1"/>
</dbReference>
<dbReference type="NCBIfam" id="NF002270">
    <property type="entry name" value="PRK01202.1"/>
    <property type="match status" value="1"/>
</dbReference>
<dbReference type="PANTHER" id="PTHR11715">
    <property type="entry name" value="GLYCINE CLEAVAGE SYSTEM H PROTEIN"/>
    <property type="match status" value="1"/>
</dbReference>
<dbReference type="PANTHER" id="PTHR11715:SF3">
    <property type="entry name" value="GLYCINE CLEAVAGE SYSTEM H PROTEIN-RELATED"/>
    <property type="match status" value="1"/>
</dbReference>
<dbReference type="Pfam" id="PF01597">
    <property type="entry name" value="GCV_H"/>
    <property type="match status" value="1"/>
</dbReference>
<dbReference type="SUPFAM" id="SSF51230">
    <property type="entry name" value="Single hybrid motif"/>
    <property type="match status" value="1"/>
</dbReference>
<dbReference type="PROSITE" id="PS50968">
    <property type="entry name" value="BIOTINYL_LIPOYL"/>
    <property type="match status" value="1"/>
</dbReference>
<comment type="function">
    <text evidence="1">The glycine cleavage system catalyzes the degradation of glycine. The H protein shuttles the methylamine group of glycine from the P protein to the T protein.</text>
</comment>
<comment type="cofactor">
    <cofactor evidence="1">
        <name>(R)-lipoate</name>
        <dbReference type="ChEBI" id="CHEBI:83088"/>
    </cofactor>
    <text evidence="1">Binds 1 lipoyl cofactor covalently.</text>
</comment>
<comment type="subunit">
    <text evidence="1">The glycine cleavage system is composed of four proteins: P, T, L and H.</text>
</comment>
<comment type="similarity">
    <text evidence="1">Belongs to the GcvH family.</text>
</comment>
<organism>
    <name type="scientific">Clostridioides difficile (strain 630)</name>
    <name type="common">Peptoclostridium difficile</name>
    <dbReference type="NCBI Taxonomy" id="272563"/>
    <lineage>
        <taxon>Bacteria</taxon>
        <taxon>Bacillati</taxon>
        <taxon>Bacillota</taxon>
        <taxon>Clostridia</taxon>
        <taxon>Peptostreptococcales</taxon>
        <taxon>Peptostreptococcaceae</taxon>
        <taxon>Clostridioides</taxon>
    </lineage>
</organism>
<reference key="1">
    <citation type="journal article" date="2006" name="Nat. Genet.">
        <title>The multidrug-resistant human pathogen Clostridium difficile has a highly mobile, mosaic genome.</title>
        <authorList>
            <person name="Sebaihia M."/>
            <person name="Wren B.W."/>
            <person name="Mullany P."/>
            <person name="Fairweather N.F."/>
            <person name="Minton N."/>
            <person name="Stabler R."/>
            <person name="Thomson N.R."/>
            <person name="Roberts A.P."/>
            <person name="Cerdeno-Tarraga A.M."/>
            <person name="Wang H."/>
            <person name="Holden M.T.G."/>
            <person name="Wright A."/>
            <person name="Churcher C."/>
            <person name="Quail M.A."/>
            <person name="Baker S."/>
            <person name="Bason N."/>
            <person name="Brooks K."/>
            <person name="Chillingworth T."/>
            <person name="Cronin A."/>
            <person name="Davis P."/>
            <person name="Dowd L."/>
            <person name="Fraser A."/>
            <person name="Feltwell T."/>
            <person name="Hance Z."/>
            <person name="Holroyd S."/>
            <person name="Jagels K."/>
            <person name="Moule S."/>
            <person name="Mungall K."/>
            <person name="Price C."/>
            <person name="Rabbinowitsch E."/>
            <person name="Sharp S."/>
            <person name="Simmonds M."/>
            <person name="Stevens K."/>
            <person name="Unwin L."/>
            <person name="Whithead S."/>
            <person name="Dupuy B."/>
            <person name="Dougan G."/>
            <person name="Barrell B."/>
            <person name="Parkhill J."/>
        </authorList>
    </citation>
    <scope>NUCLEOTIDE SEQUENCE [LARGE SCALE GENOMIC DNA]</scope>
    <source>
        <strain>630</strain>
    </source>
</reference>